<sequence>MSIMDHSPTTGVVTVIVILIAIAALGALILGCWCYLRLQRISQSEDEESIVGDGETKEPFLLVQYSAKGPCVERKAKLMTANSPEVHG</sequence>
<proteinExistence type="evidence at protein level"/>
<evidence type="ECO:0000250" key="1"/>
<evidence type="ECO:0000250" key="2">
    <source>
        <dbReference type="UniProtKB" id="O75324"/>
    </source>
</evidence>
<evidence type="ECO:0000250" key="3">
    <source>
        <dbReference type="UniProtKB" id="P61807"/>
    </source>
</evidence>
<evidence type="ECO:0000255" key="4"/>
<evidence type="ECO:0000269" key="5">
    <source>
    </source>
</evidence>
<evidence type="ECO:0000269" key="6">
    <source>
    </source>
</evidence>
<evidence type="ECO:0000305" key="7"/>
<evidence type="ECO:0007744" key="8">
    <source>
    </source>
</evidence>
<name>SNN_RAT</name>
<gene>
    <name type="primary">Snn</name>
</gene>
<protein>
    <recommendedName>
        <fullName>Stannin</fullName>
    </recommendedName>
</protein>
<feature type="chain" id="PRO_0000072016" description="Stannin">
    <location>
        <begin position="1"/>
        <end position="88"/>
    </location>
</feature>
<feature type="topological domain" description="Mitochondrial intermembrane" evidence="1">
    <location>
        <begin position="1"/>
        <end position="10"/>
    </location>
</feature>
<feature type="transmembrane region" description="Helical" evidence="4">
    <location>
        <begin position="11"/>
        <end position="31"/>
    </location>
</feature>
<feature type="topological domain" description="Cytoplasmic" evidence="1">
    <location>
        <begin position="32"/>
        <end position="88"/>
    </location>
</feature>
<feature type="modified residue" description="Phosphoserine" evidence="3">
    <location>
        <position position="49"/>
    </location>
</feature>
<feature type="modified residue" description="Phosphoserine" evidence="8">
    <location>
        <position position="83"/>
    </location>
</feature>
<organism>
    <name type="scientific">Rattus norvegicus</name>
    <name type="common">Rat</name>
    <dbReference type="NCBI Taxonomy" id="10116"/>
    <lineage>
        <taxon>Eukaryota</taxon>
        <taxon>Metazoa</taxon>
        <taxon>Chordata</taxon>
        <taxon>Craniata</taxon>
        <taxon>Vertebrata</taxon>
        <taxon>Euteleostomi</taxon>
        <taxon>Mammalia</taxon>
        <taxon>Eutheria</taxon>
        <taxon>Euarchontoglires</taxon>
        <taxon>Glires</taxon>
        <taxon>Rodentia</taxon>
        <taxon>Myomorpha</taxon>
        <taxon>Muroidea</taxon>
        <taxon>Muridae</taxon>
        <taxon>Murinae</taxon>
        <taxon>Rattus</taxon>
    </lineage>
</organism>
<reference key="1">
    <citation type="journal article" date="1992" name="Mol. Pharmacol.">
        <title>Molecular neurotoxicology of trimethyltin: identification of stannin, a novel protein expressed in trimethyltin-sensitive cells.</title>
        <authorList>
            <person name="Toggas S.M."/>
            <person name="Krady J.K."/>
            <person name="Billingsley M.L."/>
        </authorList>
    </citation>
    <scope>NUCLEOTIDE SEQUENCE [MRNA]</scope>
    <scope>FUNCTION</scope>
    <scope>INDUCTION BY TMT</scope>
    <source>
        <strain>Sprague-Dawley</strain>
    </source>
</reference>
<reference key="2">
    <citation type="journal article" date="2004" name="Genome Res.">
        <title>The status, quality, and expansion of the NIH full-length cDNA project: the Mammalian Gene Collection (MGC).</title>
        <authorList>
            <consortium name="The MGC Project Team"/>
        </authorList>
    </citation>
    <scope>NUCLEOTIDE SEQUENCE [LARGE SCALE MRNA]</scope>
    <source>
        <tissue>Thymus</tissue>
    </source>
</reference>
<reference key="3">
    <citation type="journal article" date="1997" name="Neurochem. Int.">
        <title>Localization and characterization of stannin: relationship to cellular sensitivity to organotin compounds.</title>
        <authorList>
            <person name="Dejneka N.S."/>
            <person name="Patanow C.M."/>
            <person name="Polavarapu R."/>
            <person name="Toggas S.M."/>
            <person name="Krady J.K."/>
            <person name="Billingsley M.L."/>
        </authorList>
    </citation>
    <scope>TISSUE SPECIFICITY</scope>
</reference>
<reference key="4">
    <citation type="journal article" date="2012" name="Nat. Commun.">
        <title>Quantitative maps of protein phosphorylation sites across 14 different rat organs and tissues.</title>
        <authorList>
            <person name="Lundby A."/>
            <person name="Secher A."/>
            <person name="Lage K."/>
            <person name="Nordsborg N.B."/>
            <person name="Dmytriyev A."/>
            <person name="Lundby C."/>
            <person name="Olsen J.V."/>
        </authorList>
    </citation>
    <scope>PHOSPHORYLATION [LARGE SCALE ANALYSIS] AT SER-83</scope>
    <scope>IDENTIFICATION BY MASS SPECTROMETRY [LARGE SCALE ANALYSIS]</scope>
</reference>
<dbReference type="EMBL" id="M81639">
    <property type="status" value="NOT_ANNOTATED_CDS"/>
    <property type="molecule type" value="mRNA"/>
</dbReference>
<dbReference type="EMBL" id="BC100111">
    <property type="protein sequence ID" value="AAI00112.1"/>
    <property type="molecule type" value="mRNA"/>
</dbReference>
<dbReference type="RefSeq" id="NP_001029255.1">
    <property type="nucleotide sequence ID" value="NM_001034083.1"/>
</dbReference>
<dbReference type="RefSeq" id="XP_063124864.1">
    <property type="nucleotide sequence ID" value="XM_063268794.1"/>
</dbReference>
<dbReference type="BMRB" id="P61808"/>
<dbReference type="SMR" id="P61808"/>
<dbReference type="FunCoup" id="P61808">
    <property type="interactions" value="1358"/>
</dbReference>
<dbReference type="STRING" id="10116.ENSRNOP00000074283"/>
<dbReference type="iPTMnet" id="P61808"/>
<dbReference type="PhosphoSitePlus" id="P61808"/>
<dbReference type="PaxDb" id="10116-ENSRNOP00000003333"/>
<dbReference type="Ensembl" id="ENSRNOT00000088279.2">
    <property type="protein sequence ID" value="ENSRNOP00000074283.1"/>
    <property type="gene ID" value="ENSRNOG00000058739.2"/>
</dbReference>
<dbReference type="Ensembl" id="ENSRNOT00000116003.1">
    <property type="protein sequence ID" value="ENSRNOP00000080199.1"/>
    <property type="gene ID" value="ENSRNOG00000058739.2"/>
</dbReference>
<dbReference type="GeneID" id="29140"/>
<dbReference type="KEGG" id="rno:29140"/>
<dbReference type="UCSC" id="RGD:3730">
    <property type="organism name" value="rat"/>
</dbReference>
<dbReference type="AGR" id="RGD:3730"/>
<dbReference type="CTD" id="8303"/>
<dbReference type="RGD" id="3730">
    <property type="gene designation" value="Snn"/>
</dbReference>
<dbReference type="eggNOG" id="ENOG502S14Z">
    <property type="taxonomic scope" value="Eukaryota"/>
</dbReference>
<dbReference type="GeneTree" id="ENSGT00390000009447"/>
<dbReference type="HOGENOM" id="CLU_2711160_0_0_1"/>
<dbReference type="InParanoid" id="P61808"/>
<dbReference type="OMA" id="PCMERKA"/>
<dbReference type="OrthoDB" id="9448252at2759"/>
<dbReference type="PhylomeDB" id="P61808"/>
<dbReference type="TreeFam" id="TF336244"/>
<dbReference type="PRO" id="PR:P61808"/>
<dbReference type="Proteomes" id="UP000002494">
    <property type="component" value="Chromosome 10"/>
</dbReference>
<dbReference type="Bgee" id="ENSRNOG00000058739">
    <property type="expression patterns" value="Expressed in thymus and 19 other cell types or tissues"/>
</dbReference>
<dbReference type="GO" id="GO:0005737">
    <property type="term" value="C:cytoplasm"/>
    <property type="evidence" value="ECO:0000266"/>
    <property type="project" value="RGD"/>
</dbReference>
<dbReference type="GO" id="GO:0016020">
    <property type="term" value="C:membrane"/>
    <property type="evidence" value="ECO:0000266"/>
    <property type="project" value="RGD"/>
</dbReference>
<dbReference type="GO" id="GO:0005741">
    <property type="term" value="C:mitochondrial outer membrane"/>
    <property type="evidence" value="ECO:0007669"/>
    <property type="project" value="UniProtKB-SubCell"/>
</dbReference>
<dbReference type="GO" id="GO:0046872">
    <property type="term" value="F:metal ion binding"/>
    <property type="evidence" value="ECO:0000266"/>
    <property type="project" value="RGD"/>
</dbReference>
<dbReference type="CDD" id="cd20257">
    <property type="entry name" value="Stannin"/>
    <property type="match status" value="1"/>
</dbReference>
<dbReference type="FunFam" id="4.10.280.20:FF:000001">
    <property type="entry name" value="stannin"/>
    <property type="match status" value="1"/>
</dbReference>
<dbReference type="Gene3D" id="4.10.280.20">
    <property type="entry name" value="membrane protein stannin"/>
    <property type="match status" value="1"/>
</dbReference>
<dbReference type="InterPro" id="IPR015137">
    <property type="entry name" value="SNN_cytoplasm"/>
</dbReference>
<dbReference type="InterPro" id="IPR015136">
    <property type="entry name" value="SNN_linker"/>
</dbReference>
<dbReference type="InterPro" id="IPR015135">
    <property type="entry name" value="SNN_transmemb"/>
</dbReference>
<dbReference type="InterPro" id="IPR038747">
    <property type="entry name" value="Stannin"/>
</dbReference>
<dbReference type="InterPro" id="IPR027435">
    <property type="entry name" value="Stannin_sf"/>
</dbReference>
<dbReference type="PANTHER" id="PTHR28564">
    <property type="entry name" value="STANNIN"/>
    <property type="match status" value="1"/>
</dbReference>
<dbReference type="PANTHER" id="PTHR28564:SF1">
    <property type="entry name" value="STANNIN"/>
    <property type="match status" value="1"/>
</dbReference>
<dbReference type="Pfam" id="PF09051">
    <property type="entry name" value="SNN_cytoplasm"/>
    <property type="match status" value="1"/>
</dbReference>
<dbReference type="Pfam" id="PF09050">
    <property type="entry name" value="SNN_linker"/>
    <property type="match status" value="1"/>
</dbReference>
<dbReference type="Pfam" id="PF09049">
    <property type="entry name" value="SNN_transmemb"/>
    <property type="match status" value="1"/>
</dbReference>
<accession>P61808</accession>
<accession>O88369</accession>
<accession>Q498Q9</accession>
<comment type="function">
    <text evidence="2 5">Plays a role in the toxic effects of organotins (PubMed:1635553). Plays a role in endosomal maturation (By similarity).</text>
</comment>
<comment type="subunit">
    <text evidence="2">Monomer.</text>
</comment>
<comment type="subcellular location">
    <subcellularLocation>
        <location evidence="1">Mitochondrion outer membrane</location>
        <topology evidence="1">Single-pass membrane protein</topology>
    </subcellularLocation>
</comment>
<comment type="tissue specificity">
    <text evidence="6">High level of expression in spleen, followed by brain and kidney.</text>
</comment>
<comment type="induction">
    <text evidence="5">By trimethyltin (TMT), a trialkyltin compound which is a potent neurotoxic agent that selectively damages specific brain regions.</text>
</comment>
<comment type="similarity">
    <text evidence="7">Belongs to the stannin family.</text>
</comment>
<keyword id="KW-0472">Membrane</keyword>
<keyword id="KW-0496">Mitochondrion</keyword>
<keyword id="KW-1000">Mitochondrion outer membrane</keyword>
<keyword id="KW-0597">Phosphoprotein</keyword>
<keyword id="KW-1185">Reference proteome</keyword>
<keyword id="KW-0812">Transmembrane</keyword>
<keyword id="KW-1133">Transmembrane helix</keyword>